<sequence length="267" mass="30571">MRLIIKNDSCEAGEYISQVIKKRINDYFLNRKSGDNRPFVIGLPTGSSPLPIYKRLIEMNKNKEISFQEVVTFNMDEYVGLESNHKFSYHYFMWENFFNHIDIKKENINILNGTTDNHENECKLYEEKIQSYGGIDLFLGGMGVDGHIAFNEPGSSLSSRTRIKTLTRDTIIANSRFFNNINQVPTQALTVGVGTIMDAREIILIVTGHSKAIALYRTIEEGVNHMWTASAIQMHKKSIIVCDEDATAELKVKTYKYFKQVESNSNY</sequence>
<feature type="chain" id="PRO_0000328093" description="Glucosamine-6-phosphate deaminase">
    <location>
        <begin position="1"/>
        <end position="267"/>
    </location>
</feature>
<feature type="active site" description="Proton acceptor; for enolization step" evidence="1">
    <location>
        <position position="76"/>
    </location>
</feature>
<feature type="active site" description="For ring-opening step" evidence="1">
    <location>
        <position position="145"/>
    </location>
</feature>
<feature type="active site" description="Proton acceptor; for ring-opening step" evidence="1">
    <location>
        <position position="147"/>
    </location>
</feature>
<feature type="active site" description="For ring-opening step" evidence="1">
    <location>
        <position position="152"/>
    </location>
</feature>
<evidence type="ECO:0000250" key="1"/>
<evidence type="ECO:0000250" key="2">
    <source>
        <dbReference type="UniProtKB" id="O88958"/>
    </source>
</evidence>
<evidence type="ECO:0000250" key="3">
    <source>
        <dbReference type="UniProtKB" id="P46926"/>
    </source>
</evidence>
<evidence type="ECO:0000305" key="4"/>
<evidence type="ECO:0000312" key="5">
    <source>
        <dbReference type="dictyBase" id="DDB_G0278873"/>
    </source>
</evidence>
<protein>
    <recommendedName>
        <fullName evidence="5">Glucosamine-6-phosphate deaminase</fullName>
        <shortName>GNPDA</shortName>
        <shortName>GlcN6P deaminase</shortName>
        <ecNumber evidence="3">3.5.99.6</ecNumber>
    </recommendedName>
    <alternativeName>
        <fullName evidence="5">Glucosamine-6-phosphate isomerase</fullName>
        <shortName evidence="4">GNPI</shortName>
    </alternativeName>
</protein>
<gene>
    <name evidence="5" type="primary">gnpda1</name>
    <name type="synonym">gniA</name>
    <name type="synonym">nagB2</name>
    <name evidence="5" type="ORF">DDB_G0278873</name>
</gene>
<keyword id="KW-0119">Carbohydrate metabolism</keyword>
<keyword id="KW-0963">Cytoplasm</keyword>
<keyword id="KW-0378">Hydrolase</keyword>
<keyword id="KW-1185">Reference proteome</keyword>
<reference key="1">
    <citation type="journal article" date="2005" name="Nature">
        <title>The genome of the social amoeba Dictyostelium discoideum.</title>
        <authorList>
            <person name="Eichinger L."/>
            <person name="Pachebat J.A."/>
            <person name="Gloeckner G."/>
            <person name="Rajandream M.A."/>
            <person name="Sucgang R."/>
            <person name="Berriman M."/>
            <person name="Song J."/>
            <person name="Olsen R."/>
            <person name="Szafranski K."/>
            <person name="Xu Q."/>
            <person name="Tunggal B."/>
            <person name="Kummerfeld S."/>
            <person name="Madera M."/>
            <person name="Konfortov B.A."/>
            <person name="Rivero F."/>
            <person name="Bankier A.T."/>
            <person name="Lehmann R."/>
            <person name="Hamlin N."/>
            <person name="Davies R."/>
            <person name="Gaudet P."/>
            <person name="Fey P."/>
            <person name="Pilcher K."/>
            <person name="Chen G."/>
            <person name="Saunders D."/>
            <person name="Sodergren E.J."/>
            <person name="Davis P."/>
            <person name="Kerhornou A."/>
            <person name="Nie X."/>
            <person name="Hall N."/>
            <person name="Anjard C."/>
            <person name="Hemphill L."/>
            <person name="Bason N."/>
            <person name="Farbrother P."/>
            <person name="Desany B."/>
            <person name="Just E."/>
            <person name="Morio T."/>
            <person name="Rost R."/>
            <person name="Churcher C.M."/>
            <person name="Cooper J."/>
            <person name="Haydock S."/>
            <person name="van Driessche N."/>
            <person name="Cronin A."/>
            <person name="Goodhead I."/>
            <person name="Muzny D.M."/>
            <person name="Mourier T."/>
            <person name="Pain A."/>
            <person name="Lu M."/>
            <person name="Harper D."/>
            <person name="Lindsay R."/>
            <person name="Hauser H."/>
            <person name="James K.D."/>
            <person name="Quiles M."/>
            <person name="Madan Babu M."/>
            <person name="Saito T."/>
            <person name="Buchrieser C."/>
            <person name="Wardroper A."/>
            <person name="Felder M."/>
            <person name="Thangavelu M."/>
            <person name="Johnson D."/>
            <person name="Knights A."/>
            <person name="Loulseged H."/>
            <person name="Mungall K.L."/>
            <person name="Oliver K."/>
            <person name="Price C."/>
            <person name="Quail M.A."/>
            <person name="Urushihara H."/>
            <person name="Hernandez J."/>
            <person name="Rabbinowitsch E."/>
            <person name="Steffen D."/>
            <person name="Sanders M."/>
            <person name="Ma J."/>
            <person name="Kohara Y."/>
            <person name="Sharp S."/>
            <person name="Simmonds M.N."/>
            <person name="Spiegler S."/>
            <person name="Tivey A."/>
            <person name="Sugano S."/>
            <person name="White B."/>
            <person name="Walker D."/>
            <person name="Woodward J.R."/>
            <person name="Winckler T."/>
            <person name="Tanaka Y."/>
            <person name="Shaulsky G."/>
            <person name="Schleicher M."/>
            <person name="Weinstock G.M."/>
            <person name="Rosenthal A."/>
            <person name="Cox E.C."/>
            <person name="Chisholm R.L."/>
            <person name="Gibbs R.A."/>
            <person name="Loomis W.F."/>
            <person name="Platzer M."/>
            <person name="Kay R.R."/>
            <person name="Williams J.G."/>
            <person name="Dear P.H."/>
            <person name="Noegel A.A."/>
            <person name="Barrell B.G."/>
            <person name="Kuspa A."/>
        </authorList>
    </citation>
    <scope>NUCLEOTIDE SEQUENCE [LARGE SCALE GENOMIC DNA]</scope>
    <source>
        <strain>AX4</strain>
    </source>
</reference>
<organism>
    <name type="scientific">Dictyostelium discoideum</name>
    <name type="common">Social amoeba</name>
    <dbReference type="NCBI Taxonomy" id="44689"/>
    <lineage>
        <taxon>Eukaryota</taxon>
        <taxon>Amoebozoa</taxon>
        <taxon>Evosea</taxon>
        <taxon>Eumycetozoa</taxon>
        <taxon>Dictyostelia</taxon>
        <taxon>Dictyosteliales</taxon>
        <taxon>Dictyosteliaceae</taxon>
        <taxon>Dictyostelium</taxon>
    </lineage>
</organism>
<comment type="function">
    <text evidence="3">Catalyzes the reversible conversion of alpha-D-glucosamine 6-phosphate (GlcN-6P) into beta-D-fructose 6-phosphate (Fru-6P) and ammonium ion, a regulatory reaction step in de novo uridine diphosphate-N-acetyl-alpha-D-glucosamine (UDP-GlcNAc) biosynthesis via hexosamine pathway.</text>
</comment>
<comment type="catalytic activity">
    <reaction evidence="3">
        <text>alpha-D-glucosamine 6-phosphate + H2O = beta-D-fructose 6-phosphate + NH4(+)</text>
        <dbReference type="Rhea" id="RHEA:12172"/>
        <dbReference type="ChEBI" id="CHEBI:15377"/>
        <dbReference type="ChEBI" id="CHEBI:28938"/>
        <dbReference type="ChEBI" id="CHEBI:57634"/>
        <dbReference type="ChEBI" id="CHEBI:75989"/>
        <dbReference type="EC" id="3.5.99.6"/>
    </reaction>
</comment>
<comment type="pathway">
    <text evidence="3">Nucleotide-sugar biosynthesis; UDP-N-acetyl-alpha-D-glucosamine biosynthesis; alpha-D-glucosamine 6-phosphate from D-fructose 6-phosphate: step 1/1.</text>
</comment>
<comment type="subunit">
    <text evidence="3">Homohexamer.</text>
</comment>
<comment type="subcellular location">
    <subcellularLocation>
        <location evidence="2">Cytoplasm</location>
    </subcellularLocation>
</comment>
<comment type="similarity">
    <text evidence="4">Belongs to the glucosamine/galactosamine-6-phosphate isomerase family.</text>
</comment>
<dbReference type="EC" id="3.5.99.6" evidence="3"/>
<dbReference type="EMBL" id="AAFI02000024">
    <property type="protein sequence ID" value="EAL68038.1"/>
    <property type="molecule type" value="Genomic_DNA"/>
</dbReference>
<dbReference type="RefSeq" id="XP_647794.1">
    <property type="nucleotide sequence ID" value="XM_642702.1"/>
</dbReference>
<dbReference type="SMR" id="Q54XK9"/>
<dbReference type="FunCoup" id="Q54XK9">
    <property type="interactions" value="105"/>
</dbReference>
<dbReference type="STRING" id="44689.Q54XK9"/>
<dbReference type="PaxDb" id="44689-DDB0234126"/>
<dbReference type="EnsemblProtists" id="EAL68038">
    <property type="protein sequence ID" value="EAL68038"/>
    <property type="gene ID" value="DDB_G0278873"/>
</dbReference>
<dbReference type="GeneID" id="8621753"/>
<dbReference type="KEGG" id="ddi:DDB_G0278873"/>
<dbReference type="dictyBase" id="DDB_G0278873">
    <property type="gene designation" value="gnpda1"/>
</dbReference>
<dbReference type="VEuPathDB" id="AmoebaDB:DDB_G0278873"/>
<dbReference type="eggNOG" id="KOG3148">
    <property type="taxonomic scope" value="Eukaryota"/>
</dbReference>
<dbReference type="HOGENOM" id="CLU_049611_0_1_1"/>
<dbReference type="InParanoid" id="Q54XK9"/>
<dbReference type="OMA" id="HVITQGI"/>
<dbReference type="PhylomeDB" id="Q54XK9"/>
<dbReference type="Reactome" id="R-DDI-70171">
    <property type="pathway name" value="Glycolysis"/>
</dbReference>
<dbReference type="UniPathway" id="UPA00113">
    <property type="reaction ID" value="UER00528"/>
</dbReference>
<dbReference type="PRO" id="PR:Q54XK9"/>
<dbReference type="Proteomes" id="UP000002195">
    <property type="component" value="Chromosome 3"/>
</dbReference>
<dbReference type="GO" id="GO:0005737">
    <property type="term" value="C:cytoplasm"/>
    <property type="evidence" value="ECO:0000250"/>
    <property type="project" value="UniProtKB"/>
</dbReference>
<dbReference type="GO" id="GO:0004342">
    <property type="term" value="F:glucosamine-6-phosphate deaminase activity"/>
    <property type="evidence" value="ECO:0000250"/>
    <property type="project" value="UniProtKB"/>
</dbReference>
<dbReference type="GO" id="GO:0042802">
    <property type="term" value="F:identical protein binding"/>
    <property type="evidence" value="ECO:0000318"/>
    <property type="project" value="GO_Central"/>
</dbReference>
<dbReference type="GO" id="GO:0005975">
    <property type="term" value="P:carbohydrate metabolic process"/>
    <property type="evidence" value="ECO:0007669"/>
    <property type="project" value="InterPro"/>
</dbReference>
<dbReference type="GO" id="GO:0006091">
    <property type="term" value="P:generation of precursor metabolites and energy"/>
    <property type="evidence" value="ECO:0000250"/>
    <property type="project" value="UniProtKB"/>
</dbReference>
<dbReference type="GO" id="GO:0006043">
    <property type="term" value="P:glucosamine catabolic process"/>
    <property type="evidence" value="ECO:0000250"/>
    <property type="project" value="UniProtKB"/>
</dbReference>
<dbReference type="GO" id="GO:0006046">
    <property type="term" value="P:N-acetylglucosamine catabolic process"/>
    <property type="evidence" value="ECO:0000318"/>
    <property type="project" value="GO_Central"/>
</dbReference>
<dbReference type="GO" id="GO:0019262">
    <property type="term" value="P:N-acetylneuraminate catabolic process"/>
    <property type="evidence" value="ECO:0000318"/>
    <property type="project" value="GO_Central"/>
</dbReference>
<dbReference type="CDD" id="cd01399">
    <property type="entry name" value="GlcN6P_deaminase"/>
    <property type="match status" value="1"/>
</dbReference>
<dbReference type="FunFam" id="3.40.50.1360:FF:000002">
    <property type="entry name" value="Glucosamine-6-phosphate deaminase"/>
    <property type="match status" value="1"/>
</dbReference>
<dbReference type="Gene3D" id="3.40.50.1360">
    <property type="match status" value="1"/>
</dbReference>
<dbReference type="HAMAP" id="MF_01241">
    <property type="entry name" value="GlcN6P_deamin"/>
    <property type="match status" value="1"/>
</dbReference>
<dbReference type="InterPro" id="IPR006148">
    <property type="entry name" value="Glc/Gal-6P_isomerase"/>
</dbReference>
<dbReference type="InterPro" id="IPR004547">
    <property type="entry name" value="Glucosamine6P_isomerase"/>
</dbReference>
<dbReference type="InterPro" id="IPR018321">
    <property type="entry name" value="Glucosamine6P_isomerase_CS"/>
</dbReference>
<dbReference type="InterPro" id="IPR037171">
    <property type="entry name" value="NagB/RpiA_transferase-like"/>
</dbReference>
<dbReference type="NCBIfam" id="TIGR00502">
    <property type="entry name" value="nagB"/>
    <property type="match status" value="1"/>
</dbReference>
<dbReference type="PANTHER" id="PTHR11280">
    <property type="entry name" value="GLUCOSAMINE-6-PHOSPHATE ISOMERASE"/>
    <property type="match status" value="1"/>
</dbReference>
<dbReference type="PANTHER" id="PTHR11280:SF5">
    <property type="entry name" value="GLUCOSAMINE-6-PHOSPHATE ISOMERASE"/>
    <property type="match status" value="1"/>
</dbReference>
<dbReference type="Pfam" id="PF01182">
    <property type="entry name" value="Glucosamine_iso"/>
    <property type="match status" value="1"/>
</dbReference>
<dbReference type="SUPFAM" id="SSF100950">
    <property type="entry name" value="NagB/RpiA/CoA transferase-like"/>
    <property type="match status" value="1"/>
</dbReference>
<dbReference type="PROSITE" id="PS01161">
    <property type="entry name" value="GLC_GALNAC_ISOMERASE"/>
    <property type="match status" value="1"/>
</dbReference>
<accession>Q54XK9</accession>
<proteinExistence type="inferred from homology"/>
<name>GNPI_DICDI</name>